<keyword id="KW-0004">4Fe-4S</keyword>
<keyword id="KW-0963">Cytoplasm</keyword>
<keyword id="KW-0408">Iron</keyword>
<keyword id="KW-0411">Iron-sulfur</keyword>
<keyword id="KW-0479">Metal-binding</keyword>
<keyword id="KW-1185">Reference proteome</keyword>
<keyword id="KW-0949">S-adenosyl-L-methionine</keyword>
<keyword id="KW-0808">Transferase</keyword>
<sequence length="312" mass="35157">MQRGRRKPDWLKSRPPSGSRFTEIKERLRERDLHTVCEEANCPNMGECWSGRDGPGTATFMLMGDRCSRGCNFCDVETGGMKSLDSDEPENVADAVAEIGLDYVVLTSVDRDDLADGGSEHFAETIREIQRRDPEILVETLIPDFQGDPEAIDRIIDAGPDVIAHNVETVERLQWPVRDRRADYEQSLAVLDRVGRESDIHTKTSLMLGVGEYDHEVYRTLGDLSEVGVDVVTFGQYLQPSRSHLDVFEYVHPDVFETWRAVAEREFDFLYCASGPMVRSSYKAGELFVEALLREGRSPEDARRHARAAGGD</sequence>
<comment type="function">
    <text evidence="1">Catalyzes the radical-mediated insertion of two sulfur atoms into the C-6 and C-8 positions of the octanoyl moiety bound to the lipoyl domains of lipoate-dependent enzymes, thereby converting the octanoylated domains into lipoylated derivatives.</text>
</comment>
<comment type="catalytic activity">
    <reaction evidence="1">
        <text>[[Fe-S] cluster scaffold protein carrying a second [4Fe-4S](2+) cluster] + N(6)-octanoyl-L-lysyl-[protein] + 2 oxidized [2Fe-2S]-[ferredoxin] + 2 S-adenosyl-L-methionine + 4 H(+) = [[Fe-S] cluster scaffold protein] + N(6)-[(R)-dihydrolipoyl]-L-lysyl-[protein] + 4 Fe(3+) + 2 hydrogen sulfide + 2 5'-deoxyadenosine + 2 L-methionine + 2 reduced [2Fe-2S]-[ferredoxin]</text>
        <dbReference type="Rhea" id="RHEA:16585"/>
        <dbReference type="Rhea" id="RHEA-COMP:9928"/>
        <dbReference type="Rhea" id="RHEA-COMP:10000"/>
        <dbReference type="Rhea" id="RHEA-COMP:10001"/>
        <dbReference type="Rhea" id="RHEA-COMP:10475"/>
        <dbReference type="Rhea" id="RHEA-COMP:14568"/>
        <dbReference type="Rhea" id="RHEA-COMP:14569"/>
        <dbReference type="ChEBI" id="CHEBI:15378"/>
        <dbReference type="ChEBI" id="CHEBI:17319"/>
        <dbReference type="ChEBI" id="CHEBI:29034"/>
        <dbReference type="ChEBI" id="CHEBI:29919"/>
        <dbReference type="ChEBI" id="CHEBI:33722"/>
        <dbReference type="ChEBI" id="CHEBI:33737"/>
        <dbReference type="ChEBI" id="CHEBI:33738"/>
        <dbReference type="ChEBI" id="CHEBI:57844"/>
        <dbReference type="ChEBI" id="CHEBI:59789"/>
        <dbReference type="ChEBI" id="CHEBI:78809"/>
        <dbReference type="ChEBI" id="CHEBI:83100"/>
        <dbReference type="EC" id="2.8.1.8"/>
    </reaction>
</comment>
<comment type="cofactor">
    <cofactor evidence="1">
        <name>[4Fe-4S] cluster</name>
        <dbReference type="ChEBI" id="CHEBI:49883"/>
    </cofactor>
    <text evidence="1">Binds 2 [4Fe-4S] clusters per subunit. One cluster is coordinated with 3 cysteines and an exchangeable S-adenosyl-L-methionine.</text>
</comment>
<comment type="pathway">
    <text evidence="1">Protein modification; protein lipoylation via endogenous pathway; protein N(6)-(lipoyl)lysine from octanoyl-[acyl-carrier-protein]: step 2/2.</text>
</comment>
<comment type="subcellular location">
    <subcellularLocation>
        <location evidence="1">Cytoplasm</location>
    </subcellularLocation>
</comment>
<comment type="similarity">
    <text evidence="1">Belongs to the radical SAM superfamily. Lipoyl synthase family.</text>
</comment>
<evidence type="ECO:0000255" key="1">
    <source>
        <dbReference type="HAMAP-Rule" id="MF_00206"/>
    </source>
</evidence>
<evidence type="ECO:0000255" key="2">
    <source>
        <dbReference type="PROSITE-ProRule" id="PRU01266"/>
    </source>
</evidence>
<feature type="chain" id="PRO_1000124635" description="Lipoyl synthase">
    <location>
        <begin position="1"/>
        <end position="312"/>
    </location>
</feature>
<feature type="domain" description="Radical SAM core" evidence="2">
    <location>
        <begin position="52"/>
        <end position="270"/>
    </location>
</feature>
<feature type="binding site" evidence="1">
    <location>
        <position position="37"/>
    </location>
    <ligand>
        <name>[4Fe-4S] cluster</name>
        <dbReference type="ChEBI" id="CHEBI:49883"/>
        <label>1</label>
    </ligand>
</feature>
<feature type="binding site" evidence="1">
    <location>
        <position position="42"/>
    </location>
    <ligand>
        <name>[4Fe-4S] cluster</name>
        <dbReference type="ChEBI" id="CHEBI:49883"/>
        <label>1</label>
    </ligand>
</feature>
<feature type="binding site" evidence="1">
    <location>
        <position position="48"/>
    </location>
    <ligand>
        <name>[4Fe-4S] cluster</name>
        <dbReference type="ChEBI" id="CHEBI:49883"/>
        <label>1</label>
    </ligand>
</feature>
<feature type="binding site" evidence="1">
    <location>
        <position position="67"/>
    </location>
    <ligand>
        <name>[4Fe-4S] cluster</name>
        <dbReference type="ChEBI" id="CHEBI:49883"/>
        <label>2</label>
        <note>4Fe-4S-S-AdoMet</note>
    </ligand>
</feature>
<feature type="binding site" evidence="1">
    <location>
        <position position="71"/>
    </location>
    <ligand>
        <name>[4Fe-4S] cluster</name>
        <dbReference type="ChEBI" id="CHEBI:49883"/>
        <label>2</label>
        <note>4Fe-4S-S-AdoMet</note>
    </ligand>
</feature>
<feature type="binding site" evidence="1">
    <location>
        <position position="74"/>
    </location>
    <ligand>
        <name>[4Fe-4S] cluster</name>
        <dbReference type="ChEBI" id="CHEBI:49883"/>
        <label>2</label>
        <note>4Fe-4S-S-AdoMet</note>
    </ligand>
</feature>
<feature type="binding site" evidence="1">
    <location>
        <position position="281"/>
    </location>
    <ligand>
        <name>[4Fe-4S] cluster</name>
        <dbReference type="ChEBI" id="CHEBI:49883"/>
        <label>1</label>
    </ligand>
</feature>
<accession>B9LR22</accession>
<proteinExistence type="inferred from homology"/>
<protein>
    <recommendedName>
        <fullName evidence="1">Lipoyl synthase</fullName>
        <ecNumber evidence="1">2.8.1.8</ecNumber>
    </recommendedName>
    <alternativeName>
        <fullName evidence="1">Lip-syn</fullName>
        <shortName evidence="1">LS</shortName>
    </alternativeName>
    <alternativeName>
        <fullName evidence="1">Lipoate synthase</fullName>
    </alternativeName>
    <alternativeName>
        <fullName evidence="1">Lipoic acid synthase</fullName>
    </alternativeName>
    <alternativeName>
        <fullName evidence="1">Sulfur insertion protein LipA</fullName>
    </alternativeName>
</protein>
<organism>
    <name type="scientific">Halorubrum lacusprofundi (strain ATCC 49239 / DSM 5036 / JCM 8891 / ACAM 34)</name>
    <dbReference type="NCBI Taxonomy" id="416348"/>
    <lineage>
        <taxon>Archaea</taxon>
        <taxon>Methanobacteriati</taxon>
        <taxon>Methanobacteriota</taxon>
        <taxon>Stenosarchaea group</taxon>
        <taxon>Halobacteria</taxon>
        <taxon>Halobacteriales</taxon>
        <taxon>Haloferacaceae</taxon>
        <taxon>Halorubrum</taxon>
    </lineage>
</organism>
<dbReference type="EC" id="2.8.1.8" evidence="1"/>
<dbReference type="EMBL" id="CP001365">
    <property type="protein sequence ID" value="ACM57676.1"/>
    <property type="molecule type" value="Genomic_DNA"/>
</dbReference>
<dbReference type="RefSeq" id="WP_015910799.1">
    <property type="nucleotide sequence ID" value="NC_012029.1"/>
</dbReference>
<dbReference type="SMR" id="B9LR22"/>
<dbReference type="GeneID" id="7400619"/>
<dbReference type="KEGG" id="hla:Hlac_2099"/>
<dbReference type="eggNOG" id="arCOG00660">
    <property type="taxonomic scope" value="Archaea"/>
</dbReference>
<dbReference type="HOGENOM" id="CLU_033144_2_0_2"/>
<dbReference type="UniPathway" id="UPA00538">
    <property type="reaction ID" value="UER00593"/>
</dbReference>
<dbReference type="Proteomes" id="UP000000740">
    <property type="component" value="Chromosome 1"/>
</dbReference>
<dbReference type="GO" id="GO:0005737">
    <property type="term" value="C:cytoplasm"/>
    <property type="evidence" value="ECO:0007669"/>
    <property type="project" value="UniProtKB-SubCell"/>
</dbReference>
<dbReference type="GO" id="GO:0051539">
    <property type="term" value="F:4 iron, 4 sulfur cluster binding"/>
    <property type="evidence" value="ECO:0007669"/>
    <property type="project" value="UniProtKB-UniRule"/>
</dbReference>
<dbReference type="GO" id="GO:0016992">
    <property type="term" value="F:lipoate synthase activity"/>
    <property type="evidence" value="ECO:0007669"/>
    <property type="project" value="UniProtKB-UniRule"/>
</dbReference>
<dbReference type="GO" id="GO:0046872">
    <property type="term" value="F:metal ion binding"/>
    <property type="evidence" value="ECO:0007669"/>
    <property type="project" value="UniProtKB-KW"/>
</dbReference>
<dbReference type="CDD" id="cd01335">
    <property type="entry name" value="Radical_SAM"/>
    <property type="match status" value="1"/>
</dbReference>
<dbReference type="Gene3D" id="3.20.20.70">
    <property type="entry name" value="Aldolase class I"/>
    <property type="match status" value="1"/>
</dbReference>
<dbReference type="HAMAP" id="MF_00206">
    <property type="entry name" value="Lipoyl_synth"/>
    <property type="match status" value="1"/>
</dbReference>
<dbReference type="InterPro" id="IPR013785">
    <property type="entry name" value="Aldolase_TIM"/>
</dbReference>
<dbReference type="InterPro" id="IPR006638">
    <property type="entry name" value="Elp3/MiaA/NifB-like_rSAM"/>
</dbReference>
<dbReference type="InterPro" id="IPR031691">
    <property type="entry name" value="LIAS_N"/>
</dbReference>
<dbReference type="InterPro" id="IPR003698">
    <property type="entry name" value="Lipoyl_synth"/>
</dbReference>
<dbReference type="InterPro" id="IPR007197">
    <property type="entry name" value="rSAM"/>
</dbReference>
<dbReference type="NCBIfam" id="TIGR00510">
    <property type="entry name" value="lipA"/>
    <property type="match status" value="1"/>
</dbReference>
<dbReference type="NCBIfam" id="NF004019">
    <property type="entry name" value="PRK05481.1"/>
    <property type="match status" value="1"/>
</dbReference>
<dbReference type="NCBIfam" id="NF009544">
    <property type="entry name" value="PRK12928.1"/>
    <property type="match status" value="1"/>
</dbReference>
<dbReference type="PANTHER" id="PTHR10949">
    <property type="entry name" value="LIPOYL SYNTHASE"/>
    <property type="match status" value="1"/>
</dbReference>
<dbReference type="PANTHER" id="PTHR10949:SF0">
    <property type="entry name" value="LIPOYL SYNTHASE, MITOCHONDRIAL"/>
    <property type="match status" value="1"/>
</dbReference>
<dbReference type="Pfam" id="PF16881">
    <property type="entry name" value="LIAS_N"/>
    <property type="match status" value="1"/>
</dbReference>
<dbReference type="Pfam" id="PF04055">
    <property type="entry name" value="Radical_SAM"/>
    <property type="match status" value="1"/>
</dbReference>
<dbReference type="PIRSF" id="PIRSF005963">
    <property type="entry name" value="Lipoyl_synth"/>
    <property type="match status" value="1"/>
</dbReference>
<dbReference type="SFLD" id="SFLDF00271">
    <property type="entry name" value="lipoyl_synthase"/>
    <property type="match status" value="1"/>
</dbReference>
<dbReference type="SFLD" id="SFLDG01058">
    <property type="entry name" value="lipoyl_synthase_like"/>
    <property type="match status" value="1"/>
</dbReference>
<dbReference type="SMART" id="SM00729">
    <property type="entry name" value="Elp3"/>
    <property type="match status" value="1"/>
</dbReference>
<dbReference type="SUPFAM" id="SSF102114">
    <property type="entry name" value="Radical SAM enzymes"/>
    <property type="match status" value="1"/>
</dbReference>
<dbReference type="PROSITE" id="PS51918">
    <property type="entry name" value="RADICAL_SAM"/>
    <property type="match status" value="1"/>
</dbReference>
<reference key="1">
    <citation type="journal article" date="2016" name="Stand. Genomic Sci.">
        <title>Complete genome sequence of the Antarctic Halorubrum lacusprofundi type strain ACAM 34.</title>
        <authorList>
            <person name="Anderson I.J."/>
            <person name="DasSarma P."/>
            <person name="Lucas S."/>
            <person name="Copeland A."/>
            <person name="Lapidus A."/>
            <person name="Del Rio T.G."/>
            <person name="Tice H."/>
            <person name="Dalin E."/>
            <person name="Bruce D.C."/>
            <person name="Goodwin L."/>
            <person name="Pitluck S."/>
            <person name="Sims D."/>
            <person name="Brettin T.S."/>
            <person name="Detter J.C."/>
            <person name="Han C.S."/>
            <person name="Larimer F."/>
            <person name="Hauser L."/>
            <person name="Land M."/>
            <person name="Ivanova N."/>
            <person name="Richardson P."/>
            <person name="Cavicchioli R."/>
            <person name="DasSarma S."/>
            <person name="Woese C.R."/>
            <person name="Kyrpides N.C."/>
        </authorList>
    </citation>
    <scope>NUCLEOTIDE SEQUENCE [LARGE SCALE GENOMIC DNA]</scope>
    <source>
        <strain>ATCC 49239 / DSM 5036 / JCM 8891 / ACAM 34</strain>
    </source>
</reference>
<name>LIPA_HALLT</name>
<gene>
    <name evidence="1" type="primary">lipA</name>
    <name type="ordered locus">Hlac_2099</name>
</gene>